<reference key="1">
    <citation type="journal article" date="2003" name="J. Bacteriol.">
        <title>Comparative analyses of the complete genome sequences of Pierce's disease and citrus variegated chlorosis strains of Xylella fastidiosa.</title>
        <authorList>
            <person name="Van Sluys M.A."/>
            <person name="de Oliveira M.C."/>
            <person name="Monteiro-Vitorello C.B."/>
            <person name="Miyaki C.Y."/>
            <person name="Furlan L.R."/>
            <person name="Camargo L.E.A."/>
            <person name="da Silva A.C.R."/>
            <person name="Moon D.H."/>
            <person name="Takita M.A."/>
            <person name="Lemos E.G.M."/>
            <person name="Machado M.A."/>
            <person name="Ferro M.I.T."/>
            <person name="da Silva F.R."/>
            <person name="Goldman M.H.S."/>
            <person name="Goldman G.H."/>
            <person name="Lemos M.V.F."/>
            <person name="El-Dorry H."/>
            <person name="Tsai S.M."/>
            <person name="Carrer H."/>
            <person name="Carraro D.M."/>
            <person name="de Oliveira R.C."/>
            <person name="Nunes L.R."/>
            <person name="Siqueira W.J."/>
            <person name="Coutinho L.L."/>
            <person name="Kimura E.T."/>
            <person name="Ferro E.S."/>
            <person name="Harakava R."/>
            <person name="Kuramae E.E."/>
            <person name="Marino C.L."/>
            <person name="Giglioti E."/>
            <person name="Abreu I.L."/>
            <person name="Alves L.M.C."/>
            <person name="do Amaral A.M."/>
            <person name="Baia G.S."/>
            <person name="Blanco S.R."/>
            <person name="Brito M.S."/>
            <person name="Cannavan F.S."/>
            <person name="Celestino A.V."/>
            <person name="da Cunha A.F."/>
            <person name="Fenille R.C."/>
            <person name="Ferro J.A."/>
            <person name="Formighieri E.F."/>
            <person name="Kishi L.T."/>
            <person name="Leoni S.G."/>
            <person name="Oliveira A.R."/>
            <person name="Rosa V.E. Jr."/>
            <person name="Sassaki F.T."/>
            <person name="Sena J.A.D."/>
            <person name="de Souza A.A."/>
            <person name="Truffi D."/>
            <person name="Tsukumo F."/>
            <person name="Yanai G.M."/>
            <person name="Zaros L.G."/>
            <person name="Civerolo E.L."/>
            <person name="Simpson A.J.G."/>
            <person name="Almeida N.F. Jr."/>
            <person name="Setubal J.C."/>
            <person name="Kitajima J.P."/>
        </authorList>
    </citation>
    <scope>NUCLEOTIDE SEQUENCE [LARGE SCALE GENOMIC DNA]</scope>
    <source>
        <strain>Temecula1 / ATCC 700964</strain>
    </source>
</reference>
<proteinExistence type="inferred from homology"/>
<sequence length="328" mass="35458">MKALVRVAVTGAAGQIGYSLLFRIAAGEMFGKDRPVILQMLELPDEKAQAALKGVMMELEDCAFPLLAGMVVTDNPDIAFKDADAALLVGSRPRGPGMERKDLLMENAKIFTAQGAALNKVARRDVKVLVVGNPANTNAYIAMKSAPDLNPKHFTAMLRLDHNRALSQLSTKLGKPVANIEKLIVWGNHSPTMYPDYRFATADGTPIIEAINDQAWNANSFIPTVSKRGAAIIEARGLSSAASAANAAIDHMRDWLLGSNGKWITMGVPSDGSYGIPEGMIFGFPVTTTNGEYSIVKDLPIDTFSKTYIDKTLAELEEERASITHLLR</sequence>
<protein>
    <recommendedName>
        <fullName evidence="1">Malate dehydrogenase</fullName>
        <ecNumber evidence="1">1.1.1.37</ecNumber>
    </recommendedName>
</protein>
<feature type="chain" id="PRO_0000113407" description="Malate dehydrogenase">
    <location>
        <begin position="1"/>
        <end position="328"/>
    </location>
</feature>
<feature type="active site" description="Proton acceptor" evidence="1">
    <location>
        <position position="189"/>
    </location>
</feature>
<feature type="binding site" evidence="1">
    <location>
        <begin position="11"/>
        <end position="17"/>
    </location>
    <ligand>
        <name>NAD(+)</name>
        <dbReference type="ChEBI" id="CHEBI:57540"/>
    </ligand>
</feature>
<feature type="binding site" evidence="1">
    <location>
        <position position="94"/>
    </location>
    <ligand>
        <name>substrate</name>
    </ligand>
</feature>
<feature type="binding site" evidence="1">
    <location>
        <position position="100"/>
    </location>
    <ligand>
        <name>substrate</name>
    </ligand>
</feature>
<feature type="binding site" evidence="1">
    <location>
        <position position="107"/>
    </location>
    <ligand>
        <name>NAD(+)</name>
        <dbReference type="ChEBI" id="CHEBI:57540"/>
    </ligand>
</feature>
<feature type="binding site" evidence="1">
    <location>
        <position position="114"/>
    </location>
    <ligand>
        <name>NAD(+)</name>
        <dbReference type="ChEBI" id="CHEBI:57540"/>
    </ligand>
</feature>
<feature type="binding site" evidence="1">
    <location>
        <begin position="131"/>
        <end position="133"/>
    </location>
    <ligand>
        <name>NAD(+)</name>
        <dbReference type="ChEBI" id="CHEBI:57540"/>
    </ligand>
</feature>
<feature type="binding site" evidence="1">
    <location>
        <position position="133"/>
    </location>
    <ligand>
        <name>substrate</name>
    </ligand>
</feature>
<feature type="binding site" evidence="1">
    <location>
        <position position="164"/>
    </location>
    <ligand>
        <name>substrate</name>
    </ligand>
</feature>
<evidence type="ECO:0000255" key="1">
    <source>
        <dbReference type="HAMAP-Rule" id="MF_01517"/>
    </source>
</evidence>
<gene>
    <name evidence="1" type="primary">mdh</name>
    <name type="ordered locus">PD_0492</name>
</gene>
<comment type="function">
    <text evidence="1">Catalyzes the reversible oxidation of malate to oxaloacetate.</text>
</comment>
<comment type="catalytic activity">
    <reaction evidence="1">
        <text>(S)-malate + NAD(+) = oxaloacetate + NADH + H(+)</text>
        <dbReference type="Rhea" id="RHEA:21432"/>
        <dbReference type="ChEBI" id="CHEBI:15378"/>
        <dbReference type="ChEBI" id="CHEBI:15589"/>
        <dbReference type="ChEBI" id="CHEBI:16452"/>
        <dbReference type="ChEBI" id="CHEBI:57540"/>
        <dbReference type="ChEBI" id="CHEBI:57945"/>
        <dbReference type="EC" id="1.1.1.37"/>
    </reaction>
</comment>
<comment type="similarity">
    <text evidence="1">Belongs to the LDH/MDH superfamily. MDH type 2 family.</text>
</comment>
<keyword id="KW-0520">NAD</keyword>
<keyword id="KW-0560">Oxidoreductase</keyword>
<keyword id="KW-1185">Reference proteome</keyword>
<keyword id="KW-0816">Tricarboxylic acid cycle</keyword>
<name>MDH_XYLFT</name>
<dbReference type="EC" id="1.1.1.37" evidence="1"/>
<dbReference type="EMBL" id="AE009442">
    <property type="protein sequence ID" value="AAO28367.1"/>
    <property type="molecule type" value="Genomic_DNA"/>
</dbReference>
<dbReference type="RefSeq" id="WP_004090203.1">
    <property type="nucleotide sequence ID" value="NC_004556.1"/>
</dbReference>
<dbReference type="SMR" id="Q87E35"/>
<dbReference type="KEGG" id="xft:PD_0492"/>
<dbReference type="HOGENOM" id="CLU_040727_2_0_6"/>
<dbReference type="Proteomes" id="UP000002516">
    <property type="component" value="Chromosome"/>
</dbReference>
<dbReference type="GO" id="GO:0030060">
    <property type="term" value="F:L-malate dehydrogenase (NAD+) activity"/>
    <property type="evidence" value="ECO:0007669"/>
    <property type="project" value="UniProtKB-UniRule"/>
</dbReference>
<dbReference type="GO" id="GO:0006108">
    <property type="term" value="P:malate metabolic process"/>
    <property type="evidence" value="ECO:0007669"/>
    <property type="project" value="InterPro"/>
</dbReference>
<dbReference type="GO" id="GO:0006099">
    <property type="term" value="P:tricarboxylic acid cycle"/>
    <property type="evidence" value="ECO:0007669"/>
    <property type="project" value="UniProtKB-UniRule"/>
</dbReference>
<dbReference type="CDD" id="cd01338">
    <property type="entry name" value="MDH_chloroplast-like"/>
    <property type="match status" value="1"/>
</dbReference>
<dbReference type="FunFam" id="3.40.50.720:FF:000010">
    <property type="entry name" value="Malate dehydrogenase"/>
    <property type="match status" value="1"/>
</dbReference>
<dbReference type="FunFam" id="3.90.110.10:FF:000002">
    <property type="entry name" value="Malate dehydrogenase"/>
    <property type="match status" value="1"/>
</dbReference>
<dbReference type="Gene3D" id="3.90.110.10">
    <property type="entry name" value="Lactate dehydrogenase/glycoside hydrolase, family 4, C-terminal"/>
    <property type="match status" value="1"/>
</dbReference>
<dbReference type="Gene3D" id="3.40.50.720">
    <property type="entry name" value="NAD(P)-binding Rossmann-like Domain"/>
    <property type="match status" value="1"/>
</dbReference>
<dbReference type="HAMAP" id="MF_01517">
    <property type="entry name" value="Malate_dehydrog_2"/>
    <property type="match status" value="1"/>
</dbReference>
<dbReference type="InterPro" id="IPR001557">
    <property type="entry name" value="L-lactate/malate_DH"/>
</dbReference>
<dbReference type="InterPro" id="IPR022383">
    <property type="entry name" value="Lactate/malate_DH_C"/>
</dbReference>
<dbReference type="InterPro" id="IPR001236">
    <property type="entry name" value="Lactate/malate_DH_N"/>
</dbReference>
<dbReference type="InterPro" id="IPR015955">
    <property type="entry name" value="Lactate_DH/Glyco_Ohase_4_C"/>
</dbReference>
<dbReference type="InterPro" id="IPR010945">
    <property type="entry name" value="Malate_DH_type2"/>
</dbReference>
<dbReference type="InterPro" id="IPR036291">
    <property type="entry name" value="NAD(P)-bd_dom_sf"/>
</dbReference>
<dbReference type="NCBIfam" id="TIGR01759">
    <property type="entry name" value="MalateDH-SF1"/>
    <property type="match status" value="1"/>
</dbReference>
<dbReference type="NCBIfam" id="NF003916">
    <property type="entry name" value="PRK05442.1"/>
    <property type="match status" value="1"/>
</dbReference>
<dbReference type="PANTHER" id="PTHR23382">
    <property type="entry name" value="MALATE DEHYDROGENASE"/>
    <property type="match status" value="1"/>
</dbReference>
<dbReference type="Pfam" id="PF02866">
    <property type="entry name" value="Ldh_1_C"/>
    <property type="match status" value="1"/>
</dbReference>
<dbReference type="Pfam" id="PF00056">
    <property type="entry name" value="Ldh_1_N"/>
    <property type="match status" value="1"/>
</dbReference>
<dbReference type="PIRSF" id="PIRSF000102">
    <property type="entry name" value="Lac_mal_DH"/>
    <property type="match status" value="1"/>
</dbReference>
<dbReference type="SUPFAM" id="SSF56327">
    <property type="entry name" value="LDH C-terminal domain-like"/>
    <property type="match status" value="1"/>
</dbReference>
<dbReference type="SUPFAM" id="SSF51735">
    <property type="entry name" value="NAD(P)-binding Rossmann-fold domains"/>
    <property type="match status" value="1"/>
</dbReference>
<accession>Q87E35</accession>
<organism>
    <name type="scientific">Xylella fastidiosa (strain Temecula1 / ATCC 700964)</name>
    <dbReference type="NCBI Taxonomy" id="183190"/>
    <lineage>
        <taxon>Bacteria</taxon>
        <taxon>Pseudomonadati</taxon>
        <taxon>Pseudomonadota</taxon>
        <taxon>Gammaproteobacteria</taxon>
        <taxon>Lysobacterales</taxon>
        <taxon>Lysobacteraceae</taxon>
        <taxon>Xylella</taxon>
    </lineage>
</organism>